<comment type="function">
    <text evidence="4 10">Probable transcriptional regulator (Probable). Involved in leaf vasculature patterning (PubMed:18643975).</text>
</comment>
<comment type="subcellular location">
    <subcellularLocation>
        <location evidence="5">Nucleus</location>
    </subcellularLocation>
</comment>
<comment type="disruption phenotype">
    <text evidence="4">Defects in venation pattern in leaves and cotyledons, altered phyllotaxy of vegetative leaves, short roots, delay in leaf initiation and reduced apical dominance.</text>
</comment>
<comment type="similarity">
    <text evidence="9">Belongs to the WIP C2H2-type zinc-finger protein family.</text>
</comment>
<accession>Q9FX68</accession>
<keyword id="KW-0479">Metal-binding</keyword>
<keyword id="KW-0539">Nucleus</keyword>
<keyword id="KW-1185">Reference proteome</keyword>
<keyword id="KW-0677">Repeat</keyword>
<keyword id="KW-0804">Transcription</keyword>
<keyword id="KW-0805">Transcription regulation</keyword>
<keyword id="KW-0862">Zinc</keyword>
<keyword id="KW-0863">Zinc-finger</keyword>
<proteinExistence type="evidence at transcript level"/>
<reference key="1">
    <citation type="journal article" date="2002" name="Genes Dev.">
        <title>A. thaliana TRANSPARENT TESTA 1 is involved in seed coat development and defines the WIP subfamily of plant zinc finger proteins.</title>
        <authorList>
            <person name="Sagasser M."/>
            <person name="Lu G.-H."/>
            <person name="Hahlbrock K."/>
            <person name="Weisshaar B."/>
        </authorList>
    </citation>
    <scope>NUCLEOTIDE SEQUENCE [MRNA]</scope>
    <source>
        <strain>cv. Columbia</strain>
    </source>
</reference>
<reference key="2">
    <citation type="journal article" date="1998" name="Gene">
        <title>Sequence analysis of a 40-kb Arabidopsis thaliana genomic region located at the top of chromosome 1.</title>
        <authorList>
            <person name="Terryn N."/>
            <person name="Gielen J."/>
            <person name="De Keyser A."/>
            <person name="Van Den Daele H."/>
            <person name="Ardiles W."/>
            <person name="Neyt P."/>
            <person name="De Clercq R."/>
            <person name="Coppieters J."/>
            <person name="Dehais P."/>
            <person name="Villarroel R."/>
            <person name="Rouze P."/>
            <person name="van Montagu M."/>
        </authorList>
    </citation>
    <scope>NUCLEOTIDE SEQUENCE [GENOMIC DNA]</scope>
    <source>
        <strain>cv. Columbia</strain>
    </source>
</reference>
<reference key="3">
    <citation type="journal article" date="2017" name="Plant J.">
        <title>Araport11: a complete reannotation of the Arabidopsis thaliana reference genome.</title>
        <authorList>
            <person name="Cheng C.Y."/>
            <person name="Krishnakumar V."/>
            <person name="Chan A.P."/>
            <person name="Thibaud-Nissen F."/>
            <person name="Schobel S."/>
            <person name="Town C.D."/>
        </authorList>
    </citation>
    <scope>GENOME REANNOTATION</scope>
    <source>
        <strain>cv. Columbia</strain>
    </source>
</reference>
<reference key="4">
    <citation type="journal article" date="2008" name="Plant J.">
        <title>Vein patterning screens and the defectively organized tributaries mutants in Arabidopsis thaliana.</title>
        <authorList>
            <person name="Petricka J.J."/>
            <person name="Clay N.K."/>
            <person name="Nelson T.M."/>
        </authorList>
    </citation>
    <scope>FUNCTION</scope>
    <scope>DISRUPTION PHENOTYPE</scope>
</reference>
<reference key="5">
    <citation type="journal article" date="2010" name="FEBS Lett.">
        <title>Weird fingers: functional analysis of WIP domain proteins.</title>
        <authorList>
            <person name="Appelhagen I."/>
            <person name="Huep G."/>
            <person name="Lu G.H."/>
            <person name="Strompen G."/>
            <person name="Weisshaar B."/>
            <person name="Sagasser M."/>
        </authorList>
    </citation>
    <scope>SUBCELLULAR LOCATION</scope>
    <scope>ZINC-FINGER</scope>
</reference>
<evidence type="ECO:0000250" key="1">
    <source>
        <dbReference type="UniProtKB" id="Q8VWG3"/>
    </source>
</evidence>
<evidence type="ECO:0000255" key="2">
    <source>
        <dbReference type="PROSITE-ProRule" id="PRU00042"/>
    </source>
</evidence>
<evidence type="ECO:0000256" key="3">
    <source>
        <dbReference type="SAM" id="MobiDB-lite"/>
    </source>
</evidence>
<evidence type="ECO:0000269" key="4">
    <source>
    </source>
</evidence>
<evidence type="ECO:0000269" key="5">
    <source>
    </source>
</evidence>
<evidence type="ECO:0000303" key="6">
    <source>
    </source>
</evidence>
<evidence type="ECO:0000303" key="7">
    <source>
    </source>
</evidence>
<evidence type="ECO:0000303" key="8">
    <source>
    </source>
</evidence>
<evidence type="ECO:0000305" key="9"/>
<evidence type="ECO:0000305" key="10">
    <source>
    </source>
</evidence>
<evidence type="ECO:0000312" key="11">
    <source>
        <dbReference type="Araport" id="AT1G13290"/>
    </source>
</evidence>
<evidence type="ECO:0000312" key="12">
    <source>
        <dbReference type="EMBL" id="AAG09553.1"/>
    </source>
</evidence>
<gene>
    <name evidence="6" type="primary">WIP6</name>
    <name evidence="7" type="synonym">DOT5</name>
    <name evidence="11" type="ordered locus">At1g13290</name>
    <name evidence="12" type="ORF">T6J4.5</name>
</gene>
<name>ZWIP6_ARATH</name>
<dbReference type="EMBL" id="AJ311809">
    <property type="protein sequence ID" value="CAC86166.1"/>
    <property type="molecule type" value="mRNA"/>
</dbReference>
<dbReference type="EMBL" id="AC011810">
    <property type="protein sequence ID" value="AAG09553.1"/>
    <property type="molecule type" value="Genomic_DNA"/>
</dbReference>
<dbReference type="EMBL" id="CP002684">
    <property type="protein sequence ID" value="AEE28995.1"/>
    <property type="molecule type" value="Genomic_DNA"/>
</dbReference>
<dbReference type="PIR" id="E86267">
    <property type="entry name" value="E86267"/>
</dbReference>
<dbReference type="RefSeq" id="NP_172787.1">
    <property type="nucleotide sequence ID" value="NM_101200.2"/>
</dbReference>
<dbReference type="STRING" id="3702.Q9FX68"/>
<dbReference type="PaxDb" id="3702-AT1G13290.1"/>
<dbReference type="EnsemblPlants" id="AT1G13290.1">
    <property type="protein sequence ID" value="AT1G13290.1"/>
    <property type="gene ID" value="AT1G13290"/>
</dbReference>
<dbReference type="GeneID" id="837889"/>
<dbReference type="Gramene" id="AT1G13290.1">
    <property type="protein sequence ID" value="AT1G13290.1"/>
    <property type="gene ID" value="AT1G13290"/>
</dbReference>
<dbReference type="KEGG" id="ath:AT1G13290"/>
<dbReference type="Araport" id="AT1G13290"/>
<dbReference type="TAIR" id="AT1G13290">
    <property type="gene designation" value="DOT5"/>
</dbReference>
<dbReference type="eggNOG" id="KOG1721">
    <property type="taxonomic scope" value="Eukaryota"/>
</dbReference>
<dbReference type="HOGENOM" id="CLU_052255_1_0_1"/>
<dbReference type="InParanoid" id="Q9FX68"/>
<dbReference type="OMA" id="IRYDHFR"/>
<dbReference type="PhylomeDB" id="Q9FX68"/>
<dbReference type="PRO" id="PR:Q9FX68"/>
<dbReference type="Proteomes" id="UP000006548">
    <property type="component" value="Chromosome 1"/>
</dbReference>
<dbReference type="ExpressionAtlas" id="Q9FX68">
    <property type="expression patterns" value="baseline and differential"/>
</dbReference>
<dbReference type="GO" id="GO:0005634">
    <property type="term" value="C:nucleus"/>
    <property type="evidence" value="ECO:0000314"/>
    <property type="project" value="TAIR"/>
</dbReference>
<dbReference type="GO" id="GO:0003700">
    <property type="term" value="F:DNA-binding transcription factor activity"/>
    <property type="evidence" value="ECO:0000250"/>
    <property type="project" value="TAIR"/>
</dbReference>
<dbReference type="GO" id="GO:0008270">
    <property type="term" value="F:zinc ion binding"/>
    <property type="evidence" value="ECO:0007669"/>
    <property type="project" value="UniProtKB-KW"/>
</dbReference>
<dbReference type="GO" id="GO:0010588">
    <property type="term" value="P:cotyledon vascular tissue pattern formation"/>
    <property type="evidence" value="ECO:0000315"/>
    <property type="project" value="TAIR"/>
</dbReference>
<dbReference type="GO" id="GO:0010305">
    <property type="term" value="P:leaf vascular tissue pattern formation"/>
    <property type="evidence" value="ECO:0000315"/>
    <property type="project" value="TAIR"/>
</dbReference>
<dbReference type="GO" id="GO:0010087">
    <property type="term" value="P:phloem or xylem histogenesis"/>
    <property type="evidence" value="ECO:0000315"/>
    <property type="project" value="TAIR"/>
</dbReference>
<dbReference type="GO" id="GO:0048364">
    <property type="term" value="P:root development"/>
    <property type="evidence" value="ECO:0000315"/>
    <property type="project" value="TAIR"/>
</dbReference>
<dbReference type="GO" id="GO:0048367">
    <property type="term" value="P:shoot system development"/>
    <property type="evidence" value="ECO:0000315"/>
    <property type="project" value="TAIR"/>
</dbReference>
<dbReference type="FunFam" id="3.30.160.60:FF:000523">
    <property type="entry name" value="Zinc finger protein WIP2"/>
    <property type="match status" value="1"/>
</dbReference>
<dbReference type="Gene3D" id="3.30.160.60">
    <property type="entry name" value="Classic Zinc Finger"/>
    <property type="match status" value="1"/>
</dbReference>
<dbReference type="InterPro" id="IPR055187">
    <property type="entry name" value="C2CH-3rd_BIRD-IDD"/>
</dbReference>
<dbReference type="InterPro" id="IPR043584">
    <property type="entry name" value="WIP1/2/3/4/5/6"/>
</dbReference>
<dbReference type="InterPro" id="IPR036236">
    <property type="entry name" value="Znf_C2H2_sf"/>
</dbReference>
<dbReference type="InterPro" id="IPR013087">
    <property type="entry name" value="Znf_C2H2_type"/>
</dbReference>
<dbReference type="PANTHER" id="PTHR45878">
    <property type="entry name" value="ZINC FINGER PROTEIN WIP2"/>
    <property type="match status" value="1"/>
</dbReference>
<dbReference type="PANTHER" id="PTHR45878:SF45">
    <property type="entry name" value="ZINC FINGER PROTEIN WIP6"/>
    <property type="match status" value="1"/>
</dbReference>
<dbReference type="Pfam" id="PF22995">
    <property type="entry name" value="C2CH-3rd_BIRD-IDD"/>
    <property type="match status" value="1"/>
</dbReference>
<dbReference type="Pfam" id="PF23115">
    <property type="entry name" value="zf-C2H2_STOP2_3rd"/>
    <property type="match status" value="1"/>
</dbReference>
<dbReference type="SUPFAM" id="SSF57667">
    <property type="entry name" value="beta-beta-alpha zinc fingers"/>
    <property type="match status" value="1"/>
</dbReference>
<dbReference type="PROSITE" id="PS00028">
    <property type="entry name" value="ZINC_FINGER_C2H2_1"/>
    <property type="match status" value="1"/>
</dbReference>
<dbReference type="PROSITE" id="PS50157">
    <property type="entry name" value="ZINC_FINGER_C2H2_2"/>
    <property type="match status" value="1"/>
</dbReference>
<protein>
    <recommendedName>
        <fullName>Zinc finger protein WIP6</fullName>
    </recommendedName>
    <alternativeName>
        <fullName evidence="7">Protein DEFECTIVELY ORGANIZED TRIBUTARIES 5</fullName>
    </alternativeName>
    <alternativeName>
        <fullName evidence="6">WIP-domain protein 6</fullName>
        <shortName evidence="6">AtWIP6</shortName>
    </alternativeName>
</protein>
<organism>
    <name type="scientific">Arabidopsis thaliana</name>
    <name type="common">Mouse-ear cress</name>
    <dbReference type="NCBI Taxonomy" id="3702"/>
    <lineage>
        <taxon>Eukaryota</taxon>
        <taxon>Viridiplantae</taxon>
        <taxon>Streptophyta</taxon>
        <taxon>Embryophyta</taxon>
        <taxon>Tracheophyta</taxon>
        <taxon>Spermatophyta</taxon>
        <taxon>Magnoliopsida</taxon>
        <taxon>eudicotyledons</taxon>
        <taxon>Gunneridae</taxon>
        <taxon>Pentapetalae</taxon>
        <taxon>rosids</taxon>
        <taxon>malvids</taxon>
        <taxon>Brassicales</taxon>
        <taxon>Brassicaceae</taxon>
        <taxon>Camelineae</taxon>
        <taxon>Arabidopsis</taxon>
    </lineage>
</organism>
<sequence>MYNNNQYSFSGDEDSVVLSLGPPGQQYPSHNKPTSTKPSSDHEFNHPLTNPNGVTVALHIGPPSSDKETLSGGNNQEGLTARQGQYWIPSLSQILVGPTQFSCSVCNKTFNRFNNMQMHMWGHGSQYRKGPESLRGTKSSSSILRLPCYCCAEGCKNNIDHPRSKPLKDFRTLQTHYKRKHGAKPFRCRKKCEKTFAVRGDWRTHEKNCGKLWFCVCGSDFKHKRSLKDHVRAFGDGHAAHTVSDRVVGIGDADEDDEEEEEEEEDDVEEEDAHEENVRGEKNYGIRYDHFRRYGQISDDNY</sequence>
<feature type="chain" id="PRO_0000431320" description="Zinc finger protein WIP6">
    <location>
        <begin position="1"/>
        <end position="302"/>
    </location>
</feature>
<feature type="zinc finger region" description="C2H2-type" evidence="2">
    <location>
        <begin position="101"/>
        <end position="123"/>
    </location>
</feature>
<feature type="zinc finger region" description="C2H2-type 2; atypical" evidence="8">
    <location>
        <begin position="149"/>
        <end position="181"/>
    </location>
</feature>
<feature type="zinc finger region" description="C2H2-type 3; atypical" evidence="8">
    <location>
        <begin position="186"/>
        <end position="209"/>
    </location>
</feature>
<feature type="zinc finger region" description="C2H2-type 4; atypical" evidence="8">
    <location>
        <begin position="213"/>
        <end position="238"/>
    </location>
</feature>
<feature type="region of interest" description="Disordered" evidence="3">
    <location>
        <begin position="1"/>
        <end position="78"/>
    </location>
</feature>
<feature type="region of interest" description="Disordered" evidence="3">
    <location>
        <begin position="245"/>
        <end position="281"/>
    </location>
</feature>
<feature type="short sequence motif" description="Nuclear localization signal" evidence="1">
    <location>
        <begin position="178"/>
        <end position="181"/>
    </location>
</feature>
<feature type="short sequence motif" description="Nuclear localization signal" evidence="1">
    <location>
        <begin position="222"/>
        <end position="225"/>
    </location>
</feature>
<feature type="compositionally biased region" description="Polar residues" evidence="3">
    <location>
        <begin position="26"/>
        <end position="38"/>
    </location>
</feature>
<feature type="compositionally biased region" description="Acidic residues" evidence="3">
    <location>
        <begin position="252"/>
        <end position="274"/>
    </location>
</feature>